<reference evidence="5" key="1">
    <citation type="submission" date="2004-06" db="EMBL/GenBank/DDBJ databases">
        <title>Further evidence showing CLUL1 as a conserved cone photoreceptor-specific gene.</title>
        <authorList>
            <person name="Zhang Q."/>
            <person name="Tomita H."/>
            <person name="Anderson R.E."/>
        </authorList>
    </citation>
    <scope>NUCLEOTIDE SEQUENCE [MRNA]</scope>
    <source>
        <tissue evidence="5">Retinal cone cell</tissue>
    </source>
</reference>
<name>CLUL1_BOVIN</name>
<dbReference type="EMBL" id="AY643094">
    <property type="protein sequence ID" value="AAT81475.1"/>
    <property type="molecule type" value="mRNA"/>
</dbReference>
<dbReference type="RefSeq" id="NP_001029692.1">
    <property type="nucleotide sequence ID" value="NM_001034520.1"/>
</dbReference>
<dbReference type="SMR" id="Q3ZRW9"/>
<dbReference type="FunCoup" id="Q3ZRW9">
    <property type="interactions" value="13"/>
</dbReference>
<dbReference type="STRING" id="9913.ENSBTAP00000018616"/>
<dbReference type="GlyCosmos" id="Q3ZRW9">
    <property type="glycosylation" value="6 sites, No reported glycans"/>
</dbReference>
<dbReference type="GlyGen" id="Q3ZRW9">
    <property type="glycosylation" value="6 sites"/>
</dbReference>
<dbReference type="PaxDb" id="9913-ENSBTAP00000018616"/>
<dbReference type="GeneID" id="516801"/>
<dbReference type="KEGG" id="bta:516801"/>
<dbReference type="CTD" id="27098"/>
<dbReference type="eggNOG" id="ENOG502QQ44">
    <property type="taxonomic scope" value="Eukaryota"/>
</dbReference>
<dbReference type="InParanoid" id="Q3ZRW9"/>
<dbReference type="OrthoDB" id="9894485at2759"/>
<dbReference type="Proteomes" id="UP000009136">
    <property type="component" value="Unplaced"/>
</dbReference>
<dbReference type="GO" id="GO:0005615">
    <property type="term" value="C:extracellular space"/>
    <property type="evidence" value="ECO:0000318"/>
    <property type="project" value="GO_Central"/>
</dbReference>
<dbReference type="GO" id="GO:0005634">
    <property type="term" value="C:nucleus"/>
    <property type="evidence" value="ECO:0000318"/>
    <property type="project" value="GO_Central"/>
</dbReference>
<dbReference type="GO" id="GO:0051787">
    <property type="term" value="F:misfolded protein binding"/>
    <property type="evidence" value="ECO:0000318"/>
    <property type="project" value="GO_Central"/>
</dbReference>
<dbReference type="InterPro" id="IPR000753">
    <property type="entry name" value="Clusterin-like"/>
</dbReference>
<dbReference type="InterPro" id="IPR016015">
    <property type="entry name" value="Clusterin_C"/>
</dbReference>
<dbReference type="InterPro" id="IPR016014">
    <property type="entry name" value="Clusterin_N"/>
</dbReference>
<dbReference type="PANTHER" id="PTHR10970">
    <property type="entry name" value="CLUSTERIN"/>
    <property type="match status" value="1"/>
</dbReference>
<dbReference type="PANTHER" id="PTHR10970:SF2">
    <property type="entry name" value="CLUSTERIN-LIKE PROTEIN 1"/>
    <property type="match status" value="1"/>
</dbReference>
<dbReference type="Pfam" id="PF01093">
    <property type="entry name" value="Clusterin"/>
    <property type="match status" value="1"/>
</dbReference>
<dbReference type="SMART" id="SM00035">
    <property type="entry name" value="CLa"/>
    <property type="match status" value="1"/>
</dbReference>
<dbReference type="SMART" id="SM00030">
    <property type="entry name" value="CLb"/>
    <property type="match status" value="1"/>
</dbReference>
<organism>
    <name type="scientific">Bos taurus</name>
    <name type="common">Bovine</name>
    <dbReference type="NCBI Taxonomy" id="9913"/>
    <lineage>
        <taxon>Eukaryota</taxon>
        <taxon>Metazoa</taxon>
        <taxon>Chordata</taxon>
        <taxon>Craniata</taxon>
        <taxon>Vertebrata</taxon>
        <taxon>Euteleostomi</taxon>
        <taxon>Mammalia</taxon>
        <taxon>Eutheria</taxon>
        <taxon>Laurasiatheria</taxon>
        <taxon>Artiodactyla</taxon>
        <taxon>Ruminantia</taxon>
        <taxon>Pecora</taxon>
        <taxon>Bovidae</taxon>
        <taxon>Bovinae</taxon>
        <taxon>Bos</taxon>
    </lineage>
</organism>
<comment type="subcellular location">
    <subcellularLocation>
        <location evidence="4">Secreted</location>
    </subcellularLocation>
</comment>
<comment type="similarity">
    <text evidence="2">Belongs to the clusterin family.</text>
</comment>
<gene>
    <name evidence="5" type="primary">CLUL1</name>
</gene>
<proteinExistence type="evidence at transcript level"/>
<keyword id="KW-0175">Coiled coil</keyword>
<keyword id="KW-1015">Disulfide bond</keyword>
<keyword id="KW-0325">Glycoprotein</keyword>
<keyword id="KW-1185">Reference proteome</keyword>
<keyword id="KW-0964">Secreted</keyword>
<keyword id="KW-0732">Signal</keyword>
<evidence type="ECO:0000250" key="1">
    <source>
        <dbReference type="UniProtKB" id="P10909"/>
    </source>
</evidence>
<evidence type="ECO:0000255" key="2"/>
<evidence type="ECO:0000256" key="3">
    <source>
        <dbReference type="SAM" id="MobiDB-lite"/>
    </source>
</evidence>
<evidence type="ECO:0000305" key="4"/>
<evidence type="ECO:0000312" key="5">
    <source>
        <dbReference type="EMBL" id="AAT81475.1"/>
    </source>
</evidence>
<sequence>MKPPILVFIVYLLQLRDCQCAPTGKDRTSIREDPKGFSKAGEIDVDEEVKKALIGMKQMKILMERREEEHSKLMRTLKKCREEKQEALKLMNEVQEHLEEEERLCQVSLMDSWDECKSCLESDCMRFYTTCQSSWSSMKSTIERVFRKIYQFLFPFHEDDEKELPVGEKFTEEDVQLMQIENVFSQLTVDVGFLYNMSFHVFKQMQQEFDLAFQSYFMSDTDSMEPYFFPAFSKEPAKKAHPMQSWDIPSFFQLFCNFSLSVYQSVSATVTEMLKATEDLSKQDKDSAHGGPSSTTWPVRGRGLCGEPGQNSSECLQFHARCQKCQDYLWADCPAVPELYTKADEALELVNISNQQYAQVLQMTQHHLEDTTYLMEKMREQFGWVTELASQTPGSENIFSFIKVVPGVHEGNFSKQDEKMIDISILPSSNFTLTIPLEESAESSDFISYMLAKAVQHFKEHFKSW</sequence>
<protein>
    <recommendedName>
        <fullName>Clusterin-like protein 1</fullName>
    </recommendedName>
</protein>
<feature type="signal peptide" evidence="2">
    <location>
        <begin position="1"/>
        <end position="20"/>
    </location>
</feature>
<feature type="chain" id="PRO_0000270977" description="Clusterin-like protein 1" evidence="2">
    <location>
        <begin position="21"/>
        <end position="465"/>
    </location>
</feature>
<feature type="region of interest" description="Disordered" evidence="3">
    <location>
        <begin position="280"/>
        <end position="300"/>
    </location>
</feature>
<feature type="coiled-coil region" evidence="2">
    <location>
        <begin position="62"/>
        <end position="107"/>
    </location>
</feature>
<feature type="glycosylation site" description="N-linked (GlcNAc...) asparagine" evidence="2">
    <location>
        <position position="196"/>
    </location>
</feature>
<feature type="glycosylation site" description="N-linked (GlcNAc...) asparagine" evidence="2">
    <location>
        <position position="257"/>
    </location>
</feature>
<feature type="glycosylation site" description="N-linked (GlcNAc...) asparagine" evidence="2">
    <location>
        <position position="311"/>
    </location>
</feature>
<feature type="glycosylation site" description="N-linked (GlcNAc...) asparagine" evidence="2">
    <location>
        <position position="351"/>
    </location>
</feature>
<feature type="glycosylation site" description="N-linked (GlcNAc...) asparagine" evidence="2">
    <location>
        <position position="412"/>
    </location>
</feature>
<feature type="glycosylation site" description="N-linked (GlcNAc...) asparagine" evidence="2">
    <location>
        <position position="430"/>
    </location>
</feature>
<feature type="disulfide bond" evidence="1">
    <location>
        <begin position="105"/>
        <end position="333"/>
    </location>
</feature>
<feature type="disulfide bond" evidence="1">
    <location>
        <begin position="116"/>
        <end position="325"/>
    </location>
</feature>
<feature type="disulfide bond" evidence="1">
    <location>
        <begin position="119"/>
        <end position="322"/>
    </location>
</feature>
<feature type="disulfide bond" evidence="1">
    <location>
        <begin position="124"/>
        <end position="315"/>
    </location>
</feature>
<feature type="disulfide bond" evidence="1">
    <location>
        <begin position="131"/>
        <end position="305"/>
    </location>
</feature>
<accession>Q3ZRW9</accession>